<evidence type="ECO:0000250" key="1"/>
<evidence type="ECO:0000250" key="2">
    <source>
        <dbReference type="UniProtKB" id="P40078"/>
    </source>
</evidence>
<evidence type="ECO:0000255" key="3">
    <source>
        <dbReference type="PROSITE-ProRule" id="PRU00768"/>
    </source>
</evidence>
<evidence type="ECO:0000256" key="4">
    <source>
        <dbReference type="SAM" id="MobiDB-lite"/>
    </source>
</evidence>
<evidence type="ECO:0000305" key="5"/>
<comment type="function">
    <text evidence="1">Involved in the biogenesis of the 60S ribosomal subunit. May play a part in the quality control of pre-60S particles (By similarity).</text>
</comment>
<comment type="subunit">
    <text evidence="2">Component of the pre-66S ribosomal particle. Interacts with NOP7 and RRP1. Interacts with RSA4 (via WD repeats).</text>
</comment>
<comment type="subcellular location">
    <subcellularLocation>
        <location evidence="1">Nucleus</location>
        <location evidence="1">Nucleolus</location>
    </subcellularLocation>
</comment>
<comment type="similarity">
    <text evidence="5">Belongs to the eukaryotic ribosomal protein eS8 family. Ribosome biogenesis protein NSA2 subfamily.</text>
</comment>
<keyword id="KW-0539">Nucleus</keyword>
<keyword id="KW-1185">Reference proteome</keyword>
<keyword id="KW-0687">Ribonucleoprotein</keyword>
<keyword id="KW-0690">Ribosome biogenesis</keyword>
<keyword id="KW-0698">rRNA processing</keyword>
<feature type="chain" id="PRO_0000320427" description="Ribosome biogenesis protein NSA2">
    <location>
        <begin position="1"/>
        <end position="262"/>
    </location>
</feature>
<feature type="region of interest" description="Disordered" evidence="4">
    <location>
        <begin position="1"/>
        <end position="39"/>
    </location>
</feature>
<feature type="region of interest" description="Disordered" evidence="4">
    <location>
        <begin position="61"/>
        <end position="86"/>
    </location>
</feature>
<feature type="short sequence motif" description="Nuclear localization signal 1" evidence="3">
    <location>
        <begin position="11"/>
        <end position="18"/>
    </location>
</feature>
<feature type="short sequence motif" description="Nuclear localization signal 2" evidence="3">
    <location>
        <begin position="51"/>
        <end position="58"/>
    </location>
</feature>
<feature type="compositionally biased region" description="Basic and acidic residues" evidence="4">
    <location>
        <begin position="18"/>
        <end position="37"/>
    </location>
</feature>
<feature type="compositionally biased region" description="Basic and acidic residues" evidence="4">
    <location>
        <begin position="61"/>
        <end position="83"/>
    </location>
</feature>
<name>NSA2_YARLI</name>
<reference key="1">
    <citation type="journal article" date="2004" name="Nature">
        <title>Genome evolution in yeasts.</title>
        <authorList>
            <person name="Dujon B."/>
            <person name="Sherman D."/>
            <person name="Fischer G."/>
            <person name="Durrens P."/>
            <person name="Casaregola S."/>
            <person name="Lafontaine I."/>
            <person name="de Montigny J."/>
            <person name="Marck C."/>
            <person name="Neuveglise C."/>
            <person name="Talla E."/>
            <person name="Goffard N."/>
            <person name="Frangeul L."/>
            <person name="Aigle M."/>
            <person name="Anthouard V."/>
            <person name="Babour A."/>
            <person name="Barbe V."/>
            <person name="Barnay S."/>
            <person name="Blanchin S."/>
            <person name="Beckerich J.-M."/>
            <person name="Beyne E."/>
            <person name="Bleykasten C."/>
            <person name="Boisrame A."/>
            <person name="Boyer J."/>
            <person name="Cattolico L."/>
            <person name="Confanioleri F."/>
            <person name="de Daruvar A."/>
            <person name="Despons L."/>
            <person name="Fabre E."/>
            <person name="Fairhead C."/>
            <person name="Ferry-Dumazet H."/>
            <person name="Groppi A."/>
            <person name="Hantraye F."/>
            <person name="Hennequin C."/>
            <person name="Jauniaux N."/>
            <person name="Joyet P."/>
            <person name="Kachouri R."/>
            <person name="Kerrest A."/>
            <person name="Koszul R."/>
            <person name="Lemaire M."/>
            <person name="Lesur I."/>
            <person name="Ma L."/>
            <person name="Muller H."/>
            <person name="Nicaud J.-M."/>
            <person name="Nikolski M."/>
            <person name="Oztas S."/>
            <person name="Ozier-Kalogeropoulos O."/>
            <person name="Pellenz S."/>
            <person name="Potier S."/>
            <person name="Richard G.-F."/>
            <person name="Straub M.-L."/>
            <person name="Suleau A."/>
            <person name="Swennen D."/>
            <person name="Tekaia F."/>
            <person name="Wesolowski-Louvel M."/>
            <person name="Westhof E."/>
            <person name="Wirth B."/>
            <person name="Zeniou-Meyer M."/>
            <person name="Zivanovic Y."/>
            <person name="Bolotin-Fukuhara M."/>
            <person name="Thierry A."/>
            <person name="Bouchier C."/>
            <person name="Caudron B."/>
            <person name="Scarpelli C."/>
            <person name="Gaillardin C."/>
            <person name="Weissenbach J."/>
            <person name="Wincker P."/>
            <person name="Souciet J.-L."/>
        </authorList>
    </citation>
    <scope>NUCLEOTIDE SEQUENCE [LARGE SCALE GENOMIC DNA]</scope>
    <source>
        <strain>CLIB 122 / E 150</strain>
    </source>
</reference>
<accession>Q6C6D1</accession>
<sequence length="262" mass="29878">MPQNEYIEAHIKKHGRRLDHDERKRKREAREGHRISKDAQNLTGFRAKMFAKKRYAEKVAMKKKIREHEQSKVNGTPKEHNPEDGDALPTYLLDRQQPNSAKALSSSIKQKRLEKADKFSVPLPKVRGISEEEMFKVLKSGKRRNKSWKRMITKHTFVGEGFTRRPVKLERIIRPSALRQKKANVTHPELGVTVHLPILGVKKNPQSPMYTQLGVLTRGTIIEVNVSELGLVTAGGKVVWGKYAQITNEPDRDGCVNAVLLV</sequence>
<dbReference type="EMBL" id="CR382131">
    <property type="protein sequence ID" value="CAG79372.1"/>
    <property type="molecule type" value="Genomic_DNA"/>
</dbReference>
<dbReference type="RefSeq" id="XP_503781.1">
    <property type="nucleotide sequence ID" value="XM_503781.1"/>
</dbReference>
<dbReference type="SMR" id="Q6C6D1"/>
<dbReference type="FunCoup" id="Q6C6D1">
    <property type="interactions" value="1259"/>
</dbReference>
<dbReference type="STRING" id="284591.Q6C6D1"/>
<dbReference type="EnsemblFungi" id="CAG79372">
    <property type="protein sequence ID" value="CAG79372"/>
    <property type="gene ID" value="YALI0_E10461g"/>
</dbReference>
<dbReference type="KEGG" id="yli:2912605"/>
<dbReference type="VEuPathDB" id="FungiDB:YALI0_E10461g"/>
<dbReference type="HOGENOM" id="CLU_1070048_0_0_1"/>
<dbReference type="InParanoid" id="Q6C6D1"/>
<dbReference type="OMA" id="TNTPEND"/>
<dbReference type="OrthoDB" id="2091at4891"/>
<dbReference type="Proteomes" id="UP000001300">
    <property type="component" value="Chromosome E"/>
</dbReference>
<dbReference type="GO" id="GO:0005730">
    <property type="term" value="C:nucleolus"/>
    <property type="evidence" value="ECO:0007669"/>
    <property type="project" value="UniProtKB-SubCell"/>
</dbReference>
<dbReference type="GO" id="GO:0030687">
    <property type="term" value="C:preribosome, large subunit precursor"/>
    <property type="evidence" value="ECO:0000318"/>
    <property type="project" value="GO_Central"/>
</dbReference>
<dbReference type="GO" id="GO:0000460">
    <property type="term" value="P:maturation of 5.8S rRNA"/>
    <property type="evidence" value="ECO:0000318"/>
    <property type="project" value="GO_Central"/>
</dbReference>
<dbReference type="GO" id="GO:0000470">
    <property type="term" value="P:maturation of LSU-rRNA"/>
    <property type="evidence" value="ECO:0000318"/>
    <property type="project" value="GO_Central"/>
</dbReference>
<dbReference type="CDD" id="cd11381">
    <property type="entry name" value="NSA2"/>
    <property type="match status" value="1"/>
</dbReference>
<dbReference type="FunFam" id="2.40.10.310:FF:000001">
    <property type="entry name" value="NSA2, ribosome biogenesis homolog"/>
    <property type="match status" value="1"/>
</dbReference>
<dbReference type="Gene3D" id="2.40.10.310">
    <property type="match status" value="1"/>
</dbReference>
<dbReference type="InterPro" id="IPR039411">
    <property type="entry name" value="NSA2_fam"/>
</dbReference>
<dbReference type="InterPro" id="IPR022309">
    <property type="entry name" value="Ribosomal_Se8/biogenesis_NSA2"/>
</dbReference>
<dbReference type="PANTHER" id="PTHR12642">
    <property type="entry name" value="RIBOSOME BIOGENESIS PROTEIN NSA2 HOMOLOG"/>
    <property type="match status" value="1"/>
</dbReference>
<dbReference type="Pfam" id="PF01201">
    <property type="entry name" value="Ribosomal_S8e"/>
    <property type="match status" value="1"/>
</dbReference>
<organism>
    <name type="scientific">Yarrowia lipolytica (strain CLIB 122 / E 150)</name>
    <name type="common">Yeast</name>
    <name type="synonym">Candida lipolytica</name>
    <dbReference type="NCBI Taxonomy" id="284591"/>
    <lineage>
        <taxon>Eukaryota</taxon>
        <taxon>Fungi</taxon>
        <taxon>Dikarya</taxon>
        <taxon>Ascomycota</taxon>
        <taxon>Saccharomycotina</taxon>
        <taxon>Dipodascomycetes</taxon>
        <taxon>Dipodascales</taxon>
        <taxon>Dipodascales incertae sedis</taxon>
        <taxon>Yarrowia</taxon>
    </lineage>
</organism>
<gene>
    <name type="primary">NSA2</name>
    <name type="ordered locus">YALI0E10461g</name>
</gene>
<proteinExistence type="inferred from homology"/>
<protein>
    <recommendedName>
        <fullName>Ribosome biogenesis protein NSA2</fullName>
    </recommendedName>
</protein>